<protein>
    <recommendedName>
        <fullName>C-C chemokine receptor type 3</fullName>
        <shortName>C-C CKR-3</shortName>
        <shortName>CC-CKR-3</shortName>
        <shortName>CCR-3</shortName>
        <shortName>CCR3</shortName>
        <shortName>CKR3</shortName>
    </recommendedName>
    <cdAntigenName>CD193</cdAntigenName>
</protein>
<keyword id="KW-1003">Cell membrane</keyword>
<keyword id="KW-1015">Disulfide bond</keyword>
<keyword id="KW-0297">G-protein coupled receptor</keyword>
<keyword id="KW-0472">Membrane</keyword>
<keyword id="KW-0675">Receptor</keyword>
<keyword id="KW-1185">Reference proteome</keyword>
<keyword id="KW-0807">Transducer</keyword>
<keyword id="KW-0812">Transmembrane</keyword>
<keyword id="KW-1133">Transmembrane helix</keyword>
<evidence type="ECO:0000250" key="1">
    <source>
        <dbReference type="UniProtKB" id="P51677"/>
    </source>
</evidence>
<evidence type="ECO:0000255" key="2"/>
<evidence type="ECO:0000255" key="3">
    <source>
        <dbReference type="PROSITE-ProRule" id="PRU00521"/>
    </source>
</evidence>
<evidence type="ECO:0000305" key="4"/>
<organism>
    <name type="scientific">Macaca mulatta</name>
    <name type="common">Rhesus macaque</name>
    <dbReference type="NCBI Taxonomy" id="9544"/>
    <lineage>
        <taxon>Eukaryota</taxon>
        <taxon>Metazoa</taxon>
        <taxon>Chordata</taxon>
        <taxon>Craniata</taxon>
        <taxon>Vertebrata</taxon>
        <taxon>Euteleostomi</taxon>
        <taxon>Mammalia</taxon>
        <taxon>Eutheria</taxon>
        <taxon>Euarchontoglires</taxon>
        <taxon>Primates</taxon>
        <taxon>Haplorrhini</taxon>
        <taxon>Catarrhini</taxon>
        <taxon>Cercopithecidae</taxon>
        <taxon>Cercopithecinae</taxon>
        <taxon>Macaca</taxon>
    </lineage>
</organism>
<dbReference type="EMBL" id="AF017283">
    <property type="protein sequence ID" value="AAB70527.1"/>
    <property type="molecule type" value="Genomic_DNA"/>
</dbReference>
<dbReference type="EMBL" id="Y13776">
    <property type="protein sequence ID" value="CAA74107.1"/>
    <property type="molecule type" value="Genomic_DNA"/>
</dbReference>
<dbReference type="SMR" id="P56483"/>
<dbReference type="FunCoup" id="P56483">
    <property type="interactions" value="861"/>
</dbReference>
<dbReference type="STRING" id="9544.ENSMMUP00000006084"/>
<dbReference type="BindingDB" id="P56483"/>
<dbReference type="ChEMBL" id="CHEMBL5176"/>
<dbReference type="PaxDb" id="9544-ENSMMUP00000006084"/>
<dbReference type="eggNOG" id="KOG3656">
    <property type="taxonomic scope" value="Eukaryota"/>
</dbReference>
<dbReference type="InParanoid" id="P56483"/>
<dbReference type="Proteomes" id="UP000006718">
    <property type="component" value="Unassembled WGS sequence"/>
</dbReference>
<dbReference type="GO" id="GO:0005737">
    <property type="term" value="C:cytoplasm"/>
    <property type="evidence" value="ECO:0000318"/>
    <property type="project" value="GO_Central"/>
</dbReference>
<dbReference type="GO" id="GO:0009897">
    <property type="term" value="C:external side of plasma membrane"/>
    <property type="evidence" value="ECO:0000318"/>
    <property type="project" value="GO_Central"/>
</dbReference>
<dbReference type="GO" id="GO:0019957">
    <property type="term" value="F:C-C chemokine binding"/>
    <property type="evidence" value="ECO:0000318"/>
    <property type="project" value="GO_Central"/>
</dbReference>
<dbReference type="GO" id="GO:0016493">
    <property type="term" value="F:C-C chemokine receptor activity"/>
    <property type="evidence" value="ECO:0000318"/>
    <property type="project" value="GO_Central"/>
</dbReference>
<dbReference type="GO" id="GO:0019722">
    <property type="term" value="P:calcium-mediated signaling"/>
    <property type="evidence" value="ECO:0000318"/>
    <property type="project" value="GO_Central"/>
</dbReference>
<dbReference type="GO" id="GO:0060326">
    <property type="term" value="P:cell chemotaxis"/>
    <property type="evidence" value="ECO:0000318"/>
    <property type="project" value="GO_Central"/>
</dbReference>
<dbReference type="GO" id="GO:0006955">
    <property type="term" value="P:immune response"/>
    <property type="evidence" value="ECO:0000318"/>
    <property type="project" value="GO_Central"/>
</dbReference>
<dbReference type="GO" id="GO:0006954">
    <property type="term" value="P:inflammatory response"/>
    <property type="evidence" value="ECO:0000318"/>
    <property type="project" value="GO_Central"/>
</dbReference>
<dbReference type="GO" id="GO:0007204">
    <property type="term" value="P:positive regulation of cytosolic calcium ion concentration"/>
    <property type="evidence" value="ECO:0000318"/>
    <property type="project" value="GO_Central"/>
</dbReference>
<dbReference type="FunFam" id="1.20.1070.10:FF:000026">
    <property type="entry name" value="C-C chemokine receptor type 5"/>
    <property type="match status" value="1"/>
</dbReference>
<dbReference type="Gene3D" id="1.20.1070.10">
    <property type="entry name" value="Rhodopsin 7-helix transmembrane proteins"/>
    <property type="match status" value="1"/>
</dbReference>
<dbReference type="InterPro" id="IPR050119">
    <property type="entry name" value="CCR1-9-like"/>
</dbReference>
<dbReference type="InterPro" id="IPR002238">
    <property type="entry name" value="Chemokine_CCR3"/>
</dbReference>
<dbReference type="InterPro" id="IPR000355">
    <property type="entry name" value="Chemokine_rcpt"/>
</dbReference>
<dbReference type="InterPro" id="IPR000276">
    <property type="entry name" value="GPCR_Rhodpsn"/>
</dbReference>
<dbReference type="InterPro" id="IPR017452">
    <property type="entry name" value="GPCR_Rhodpsn_7TM"/>
</dbReference>
<dbReference type="PANTHER" id="PTHR10489:SF649">
    <property type="entry name" value="C-C CHEMOKINE RECEPTOR TYPE 3"/>
    <property type="match status" value="1"/>
</dbReference>
<dbReference type="PANTHER" id="PTHR10489">
    <property type="entry name" value="CELL ADHESION MOLECULE"/>
    <property type="match status" value="1"/>
</dbReference>
<dbReference type="Pfam" id="PF00001">
    <property type="entry name" value="7tm_1"/>
    <property type="match status" value="1"/>
</dbReference>
<dbReference type="PRINTS" id="PR00657">
    <property type="entry name" value="CCCHEMOKINER"/>
</dbReference>
<dbReference type="PRINTS" id="PR01108">
    <property type="entry name" value="CHEMOKINER3"/>
</dbReference>
<dbReference type="PRINTS" id="PR00237">
    <property type="entry name" value="GPCRRHODOPSN"/>
</dbReference>
<dbReference type="SUPFAM" id="SSF81321">
    <property type="entry name" value="Family A G protein-coupled receptor-like"/>
    <property type="match status" value="1"/>
</dbReference>
<dbReference type="PROSITE" id="PS00237">
    <property type="entry name" value="G_PROTEIN_RECEP_F1_1"/>
    <property type="match status" value="1"/>
</dbReference>
<dbReference type="PROSITE" id="PS50262">
    <property type="entry name" value="G_PROTEIN_RECEP_F1_2"/>
    <property type="match status" value="1"/>
</dbReference>
<feature type="chain" id="PRO_0000069241" description="C-C chemokine receptor type 3">
    <location>
        <begin position="1"/>
        <end position="355"/>
    </location>
</feature>
<feature type="topological domain" description="Extracellular" evidence="2">
    <location>
        <begin position="1"/>
        <end position="34"/>
    </location>
</feature>
<feature type="transmembrane region" description="Helical; Name=1" evidence="2">
    <location>
        <begin position="35"/>
        <end position="62"/>
    </location>
</feature>
<feature type="topological domain" description="Cytoplasmic" evidence="2">
    <location>
        <begin position="63"/>
        <end position="72"/>
    </location>
</feature>
<feature type="transmembrane region" description="Helical; Name=2" evidence="2">
    <location>
        <begin position="73"/>
        <end position="93"/>
    </location>
</feature>
<feature type="topological domain" description="Extracellular" evidence="2">
    <location>
        <begin position="94"/>
        <end position="107"/>
    </location>
</feature>
<feature type="transmembrane region" description="Helical; Name=3" evidence="2">
    <location>
        <begin position="108"/>
        <end position="129"/>
    </location>
</feature>
<feature type="topological domain" description="Cytoplasmic" evidence="2">
    <location>
        <begin position="130"/>
        <end position="146"/>
    </location>
</feature>
<feature type="transmembrane region" description="Helical; Name=4" evidence="2">
    <location>
        <begin position="147"/>
        <end position="171"/>
    </location>
</feature>
<feature type="topological domain" description="Extracellular" evidence="2">
    <location>
        <begin position="172"/>
        <end position="203"/>
    </location>
</feature>
<feature type="transmembrane region" description="Helical; Name=5" evidence="2">
    <location>
        <begin position="204"/>
        <end position="223"/>
    </location>
</feature>
<feature type="topological domain" description="Cytoplasmic" evidence="2">
    <location>
        <begin position="224"/>
        <end position="239"/>
    </location>
</feature>
<feature type="transmembrane region" description="Helical; Name=6" evidence="2">
    <location>
        <begin position="240"/>
        <end position="264"/>
    </location>
</feature>
<feature type="topological domain" description="Extracellular" evidence="2">
    <location>
        <begin position="265"/>
        <end position="281"/>
    </location>
</feature>
<feature type="transmembrane region" description="Helical; Name=7" evidence="2">
    <location>
        <begin position="282"/>
        <end position="305"/>
    </location>
</feature>
<feature type="topological domain" description="Cytoplasmic" evidence="2">
    <location>
        <begin position="306"/>
        <end position="355"/>
    </location>
</feature>
<feature type="disulfide bond" evidence="3">
    <location>
        <begin position="106"/>
        <end position="183"/>
    </location>
</feature>
<feature type="sequence conflict" description="In Ref. 2; CAA74107." evidence="4" ref="2">
    <original>K</original>
    <variation>E</variation>
    <location>
        <position position="180"/>
    </location>
</feature>
<feature type="sequence conflict" description="In Ref. 2; CAA74107." evidence="4" ref="2">
    <original>K</original>
    <variation>R</variation>
    <location>
        <position position="202"/>
    </location>
</feature>
<comment type="function">
    <text evidence="1">Receptor for C-C type chemokine. Binds and responds to a variety of chemokines, including CCL11, CCL26, CCL7, CCL13, RANTES(CCL5) and CCL15. Subsequently transduces a signal by increasing the intracellular calcium ions level. In addition acts as a possible functional receptor for NARS1.</text>
</comment>
<comment type="subcellular location">
    <subcellularLocation>
        <location>Cell membrane</location>
        <topology evidence="2">Multi-pass membrane protein</topology>
    </subcellularLocation>
</comment>
<comment type="similarity">
    <text evidence="3">Belongs to the G-protein coupled receptor 1 family.</text>
</comment>
<name>CCR3_MACMU</name>
<proteinExistence type="inferred from homology"/>
<reference key="1">
    <citation type="journal article" date="2001" name="AIDS Res. Hum. Retroviruses">
        <title>Identification and comparison of eleven rhesus macaque chemokine receptors.</title>
        <authorList>
            <person name="Margulies B.J."/>
            <person name="Hauer D.A."/>
            <person name="Clements J.E."/>
        </authorList>
    </citation>
    <scope>NUCLEOTIDE SEQUENCE [GENOMIC DNA]</scope>
</reference>
<reference key="2">
    <citation type="journal article" date="1998" name="Virology">
        <title>The rhesus macaque CCR3 chemokine receptor is a cell entry cofactor for HIV-2, but not for HIV-1.</title>
        <authorList>
            <person name="Sol N."/>
            <person name="Treboute C."/>
            <person name="Gomas E."/>
            <person name="Ferchal F."/>
            <person name="Shacklett B."/>
            <person name="Alizon M."/>
        </authorList>
    </citation>
    <scope>NUCLEOTIDE SEQUENCE [GENOMIC DNA]</scope>
</reference>
<sequence length="355" mass="40806">MTTSLDTVETFGPTSYDDDMGLLCEKADVGALIAQFVPPLYSLVFMVGLLGNVVVVMILIKYRRLRIMTNIYLLNLAISDLLFLFTLPFWIHYVRERNWVFSHGMCKVLSGFYHTGLYSEIFFIILLTIDRYLAIVHAVFALRARTVTFGVITSIVTWGLAVLAALPEFIFYGTEKLFPKTLCSAIYPQDTVYSWRHFHTLKMTILCLALPLLVMAICYTGIIKTLLRCPSKKKYKAIRLIFVIMAVFFIFWTPYNVAILISTYQSVLFGLDCERSKHLDLFVLATEVIAYSHCCVNPVIYAFVGERFRKYLRHFFHRHVLMHLGKYIPFLPSEKLERTSSVSPSTAEPELSIVF</sequence>
<accession>P56483</accession>
<gene>
    <name type="primary">CCR3</name>
    <name type="synonym">CMKBR3</name>
</gene>